<protein>
    <recommendedName>
        <fullName evidence="1">ATP synthase subunit c</fullName>
    </recommendedName>
    <alternativeName>
        <fullName evidence="1">ATP synthase F(0) sector subunit c</fullName>
    </alternativeName>
    <alternativeName>
        <fullName evidence="1">F-type ATPase subunit c</fullName>
        <shortName evidence="1">F-ATPase subunit c</shortName>
    </alternativeName>
    <alternativeName>
        <fullName evidence="1">Lipid-binding protein</fullName>
    </alternativeName>
</protein>
<accession>B5EZ01</accession>
<keyword id="KW-0066">ATP synthesis</keyword>
<keyword id="KW-0997">Cell inner membrane</keyword>
<keyword id="KW-1003">Cell membrane</keyword>
<keyword id="KW-0138">CF(0)</keyword>
<keyword id="KW-0375">Hydrogen ion transport</keyword>
<keyword id="KW-0406">Ion transport</keyword>
<keyword id="KW-0446">Lipid-binding</keyword>
<keyword id="KW-0472">Membrane</keyword>
<keyword id="KW-0812">Transmembrane</keyword>
<keyword id="KW-1133">Transmembrane helix</keyword>
<keyword id="KW-0813">Transport</keyword>
<evidence type="ECO:0000255" key="1">
    <source>
        <dbReference type="HAMAP-Rule" id="MF_01396"/>
    </source>
</evidence>
<organism>
    <name type="scientific">Salmonella agona (strain SL483)</name>
    <dbReference type="NCBI Taxonomy" id="454166"/>
    <lineage>
        <taxon>Bacteria</taxon>
        <taxon>Pseudomonadati</taxon>
        <taxon>Pseudomonadota</taxon>
        <taxon>Gammaproteobacteria</taxon>
        <taxon>Enterobacterales</taxon>
        <taxon>Enterobacteriaceae</taxon>
        <taxon>Salmonella</taxon>
    </lineage>
</organism>
<name>ATPL_SALA4</name>
<feature type="chain" id="PRO_1000184453" description="ATP synthase subunit c">
    <location>
        <begin position="1"/>
        <end position="79"/>
    </location>
</feature>
<feature type="transmembrane region" description="Helical" evidence="1">
    <location>
        <begin position="11"/>
        <end position="31"/>
    </location>
</feature>
<feature type="transmembrane region" description="Helical" evidence="1">
    <location>
        <begin position="53"/>
        <end position="73"/>
    </location>
</feature>
<feature type="site" description="Reversibly protonated during proton transport" evidence="1">
    <location>
        <position position="61"/>
    </location>
</feature>
<proteinExistence type="inferred from homology"/>
<gene>
    <name evidence="1" type="primary">atpE</name>
    <name type="ordered locus">SeAg_B4095</name>
</gene>
<comment type="function">
    <text evidence="1">F(1)F(0) ATP synthase produces ATP from ADP in the presence of a proton or sodium gradient. F-type ATPases consist of two structural domains, F(1) containing the extramembraneous catalytic core and F(0) containing the membrane proton channel, linked together by a central stalk and a peripheral stalk. During catalysis, ATP synthesis in the catalytic domain of F(1) is coupled via a rotary mechanism of the central stalk subunits to proton translocation.</text>
</comment>
<comment type="function">
    <text evidence="1">Key component of the F(0) channel; it plays a direct role in translocation across the membrane. A homomeric c-ring of between 10-14 subunits forms the central stalk rotor element with the F(1) delta and epsilon subunits.</text>
</comment>
<comment type="subunit">
    <text evidence="1">F-type ATPases have 2 components, F(1) - the catalytic core - and F(0) - the membrane proton channel. F(1) has five subunits: alpha(3), beta(3), gamma(1), delta(1), epsilon(1). F(0) has three main subunits: a(1), b(2) and c(10-14). The alpha and beta chains form an alternating ring which encloses part of the gamma chain. F(1) is attached to F(0) by a central stalk formed by the gamma and epsilon chains, while a peripheral stalk is formed by the delta and b chains.</text>
</comment>
<comment type="subcellular location">
    <subcellularLocation>
        <location evidence="1">Cell inner membrane</location>
        <topology evidence="1">Multi-pass membrane protein</topology>
    </subcellularLocation>
</comment>
<comment type="similarity">
    <text evidence="1">Belongs to the ATPase C chain family.</text>
</comment>
<reference key="1">
    <citation type="journal article" date="2011" name="J. Bacteriol.">
        <title>Comparative genomics of 28 Salmonella enterica isolates: evidence for CRISPR-mediated adaptive sublineage evolution.</title>
        <authorList>
            <person name="Fricke W.F."/>
            <person name="Mammel M.K."/>
            <person name="McDermott P.F."/>
            <person name="Tartera C."/>
            <person name="White D.G."/>
            <person name="Leclerc J.E."/>
            <person name="Ravel J."/>
            <person name="Cebula T.A."/>
        </authorList>
    </citation>
    <scope>NUCLEOTIDE SEQUENCE [LARGE SCALE GENOMIC DNA]</scope>
    <source>
        <strain>SL483</strain>
    </source>
</reference>
<sequence>MENLNMDLLYMAAAVMMGLAAIGAAIGIGILGGKFLEGAARQPDLIPLLRTQFFIVMGLVDAIPMIAVGLGLYVMFAVA</sequence>
<dbReference type="EMBL" id="CP001138">
    <property type="protein sequence ID" value="ACH51019.1"/>
    <property type="molecule type" value="Genomic_DNA"/>
</dbReference>
<dbReference type="RefSeq" id="WP_000429386.1">
    <property type="nucleotide sequence ID" value="NC_011149.1"/>
</dbReference>
<dbReference type="SMR" id="B5EZ01"/>
<dbReference type="GeneID" id="98390858"/>
<dbReference type="KEGG" id="sea:SeAg_B4095"/>
<dbReference type="HOGENOM" id="CLU_148047_1_0_6"/>
<dbReference type="Proteomes" id="UP000008819">
    <property type="component" value="Chromosome"/>
</dbReference>
<dbReference type="GO" id="GO:0005886">
    <property type="term" value="C:plasma membrane"/>
    <property type="evidence" value="ECO:0007669"/>
    <property type="project" value="UniProtKB-SubCell"/>
</dbReference>
<dbReference type="GO" id="GO:0045259">
    <property type="term" value="C:proton-transporting ATP synthase complex"/>
    <property type="evidence" value="ECO:0007669"/>
    <property type="project" value="UniProtKB-KW"/>
</dbReference>
<dbReference type="GO" id="GO:0033177">
    <property type="term" value="C:proton-transporting two-sector ATPase complex, proton-transporting domain"/>
    <property type="evidence" value="ECO:0007669"/>
    <property type="project" value="InterPro"/>
</dbReference>
<dbReference type="GO" id="GO:0008289">
    <property type="term" value="F:lipid binding"/>
    <property type="evidence" value="ECO:0007669"/>
    <property type="project" value="UniProtKB-KW"/>
</dbReference>
<dbReference type="GO" id="GO:0046933">
    <property type="term" value="F:proton-transporting ATP synthase activity, rotational mechanism"/>
    <property type="evidence" value="ECO:0007669"/>
    <property type="project" value="UniProtKB-UniRule"/>
</dbReference>
<dbReference type="CDD" id="cd18185">
    <property type="entry name" value="ATP-synt_Fo_c_ATPE"/>
    <property type="match status" value="1"/>
</dbReference>
<dbReference type="FunFam" id="1.20.20.10:FF:000002">
    <property type="entry name" value="ATP synthase subunit c"/>
    <property type="match status" value="1"/>
</dbReference>
<dbReference type="Gene3D" id="1.20.20.10">
    <property type="entry name" value="F1F0 ATP synthase subunit C"/>
    <property type="match status" value="1"/>
</dbReference>
<dbReference type="HAMAP" id="MF_01396">
    <property type="entry name" value="ATP_synth_c_bact"/>
    <property type="match status" value="1"/>
</dbReference>
<dbReference type="InterPro" id="IPR005953">
    <property type="entry name" value="ATP_synth_csu_bac/chlpt"/>
</dbReference>
<dbReference type="InterPro" id="IPR000454">
    <property type="entry name" value="ATP_synth_F0_csu"/>
</dbReference>
<dbReference type="InterPro" id="IPR020537">
    <property type="entry name" value="ATP_synth_F0_csu_DDCD_BS"/>
</dbReference>
<dbReference type="InterPro" id="IPR038662">
    <property type="entry name" value="ATP_synth_F0_csu_sf"/>
</dbReference>
<dbReference type="InterPro" id="IPR002379">
    <property type="entry name" value="ATPase_proteolipid_c-like_dom"/>
</dbReference>
<dbReference type="InterPro" id="IPR035921">
    <property type="entry name" value="F/V-ATP_Csub_sf"/>
</dbReference>
<dbReference type="NCBIfam" id="TIGR01260">
    <property type="entry name" value="ATP_synt_c"/>
    <property type="match status" value="1"/>
</dbReference>
<dbReference type="NCBIfam" id="NF005363">
    <property type="entry name" value="PRK06876.1"/>
    <property type="match status" value="1"/>
</dbReference>
<dbReference type="Pfam" id="PF00137">
    <property type="entry name" value="ATP-synt_C"/>
    <property type="match status" value="1"/>
</dbReference>
<dbReference type="PRINTS" id="PR00124">
    <property type="entry name" value="ATPASEC"/>
</dbReference>
<dbReference type="SUPFAM" id="SSF81333">
    <property type="entry name" value="F1F0 ATP synthase subunit C"/>
    <property type="match status" value="1"/>
</dbReference>
<dbReference type="PROSITE" id="PS00605">
    <property type="entry name" value="ATPASE_C"/>
    <property type="match status" value="1"/>
</dbReference>